<name>ABITM_PONAB</name>
<feature type="chain" id="PRO_0000291930" description="Protein Abitram">
    <location>
        <begin position="1"/>
        <end position="181"/>
    </location>
</feature>
<sequence length="181" mass="20378">MATEPEAAEPVVPSLVDRYFTRWYKPDVKGKFCEDHCILQHSNRICVITLAESHPVLQSGKTIKSISYQISTNCSRLQNKVSGKFKRGAQFLTELAPLCKIYCSDGEEYTVSSCVRGRLMEVNENILHKPSILQEKPSTEGYIAVVLPKFEESKSITEGLLTQKQYEEVMVKRINATTATS</sequence>
<proteinExistence type="evidence at transcript level"/>
<gene>
    <name type="primary">ABITRAM</name>
    <name type="synonym">FAM206A</name>
</gene>
<reference key="1">
    <citation type="submission" date="2004-11" db="EMBL/GenBank/DDBJ databases">
        <authorList>
            <consortium name="The German cDNA consortium"/>
        </authorList>
    </citation>
    <scope>NUCLEOTIDE SEQUENCE [LARGE SCALE MRNA]</scope>
    <source>
        <tissue>Heart</tissue>
    </source>
</reference>
<protein>
    <recommendedName>
        <fullName evidence="2">Protein Abitram</fullName>
    </recommendedName>
    <alternativeName>
        <fullName>Actin-binding transcription modulator</fullName>
    </alternativeName>
    <alternativeName>
        <fullName>Protein Simiate</fullName>
    </alternativeName>
</protein>
<dbReference type="EMBL" id="CR857082">
    <property type="protein sequence ID" value="CAH89387.1"/>
    <property type="molecule type" value="mRNA"/>
</dbReference>
<dbReference type="RefSeq" id="NP_001127141.1">
    <property type="nucleotide sequence ID" value="NM_001133669.1"/>
</dbReference>
<dbReference type="RefSeq" id="XP_009243001.1">
    <property type="nucleotide sequence ID" value="XM_009244726.1"/>
</dbReference>
<dbReference type="SMR" id="Q5RFS0"/>
<dbReference type="FunCoup" id="Q5RFS0">
    <property type="interactions" value="1080"/>
</dbReference>
<dbReference type="STRING" id="9601.ENSPPYP00000021823"/>
<dbReference type="Ensembl" id="ENSPPYT00000022719.3">
    <property type="protein sequence ID" value="ENSPPYP00000021823.2"/>
    <property type="gene ID" value="ENSPPYG00000019483.3"/>
</dbReference>
<dbReference type="GeneID" id="100174191"/>
<dbReference type="KEGG" id="pon:100174191"/>
<dbReference type="CTD" id="54942"/>
<dbReference type="eggNOG" id="KOG3266">
    <property type="taxonomic scope" value="Eukaryota"/>
</dbReference>
<dbReference type="GeneTree" id="ENSGT00450000040303"/>
<dbReference type="HOGENOM" id="CLU_107323_1_0_1"/>
<dbReference type="InParanoid" id="Q5RFS0"/>
<dbReference type="OMA" id="GKACEDH"/>
<dbReference type="OrthoDB" id="48130at2759"/>
<dbReference type="TreeFam" id="TF313930"/>
<dbReference type="Proteomes" id="UP000001595">
    <property type="component" value="Chromosome 9"/>
</dbReference>
<dbReference type="GO" id="GO:0030425">
    <property type="term" value="C:dendrite"/>
    <property type="evidence" value="ECO:0007669"/>
    <property type="project" value="UniProtKB-SubCell"/>
</dbReference>
<dbReference type="GO" id="GO:0032433">
    <property type="term" value="C:filopodium tip"/>
    <property type="evidence" value="ECO:0000250"/>
    <property type="project" value="UniProtKB"/>
</dbReference>
<dbReference type="GO" id="GO:0030426">
    <property type="term" value="C:growth cone"/>
    <property type="evidence" value="ECO:0000250"/>
    <property type="project" value="UniProtKB"/>
</dbReference>
<dbReference type="GO" id="GO:0030027">
    <property type="term" value="C:lamellipodium"/>
    <property type="evidence" value="ECO:0000250"/>
    <property type="project" value="UniProtKB"/>
</dbReference>
<dbReference type="GO" id="GO:0016607">
    <property type="term" value="C:nuclear speck"/>
    <property type="evidence" value="ECO:0007669"/>
    <property type="project" value="UniProtKB-SubCell"/>
</dbReference>
<dbReference type="GO" id="GO:0051015">
    <property type="term" value="F:actin filament binding"/>
    <property type="evidence" value="ECO:0000250"/>
    <property type="project" value="UniProtKB"/>
</dbReference>
<dbReference type="GO" id="GO:0003785">
    <property type="term" value="F:actin monomer binding"/>
    <property type="evidence" value="ECO:0000250"/>
    <property type="project" value="UniProtKB"/>
</dbReference>
<dbReference type="GO" id="GO:0048813">
    <property type="term" value="P:dendrite morphogenesis"/>
    <property type="evidence" value="ECO:0000250"/>
    <property type="project" value="UniProtKB"/>
</dbReference>
<dbReference type="GO" id="GO:0030833">
    <property type="term" value="P:regulation of actin filament polymerization"/>
    <property type="evidence" value="ECO:0000250"/>
    <property type="project" value="UniProtKB"/>
</dbReference>
<dbReference type="GO" id="GO:0051489">
    <property type="term" value="P:regulation of filopodium assembly"/>
    <property type="evidence" value="ECO:0000250"/>
    <property type="project" value="UniProtKB"/>
</dbReference>
<dbReference type="FunFam" id="2.40.50.100:FF:000048">
    <property type="entry name" value="Protein Abitram"/>
    <property type="match status" value="1"/>
</dbReference>
<dbReference type="Gene3D" id="2.40.50.100">
    <property type="match status" value="1"/>
</dbReference>
<dbReference type="InterPro" id="IPR039169">
    <property type="entry name" value="Abitram"/>
</dbReference>
<dbReference type="InterPro" id="IPR033753">
    <property type="entry name" value="GCV_H/Fam206"/>
</dbReference>
<dbReference type="InterPro" id="IPR011053">
    <property type="entry name" value="Single_hybrid_motif"/>
</dbReference>
<dbReference type="PANTHER" id="PTHR13651">
    <property type="entry name" value="PROTEIN ABITRAM"/>
    <property type="match status" value="1"/>
</dbReference>
<dbReference type="PANTHER" id="PTHR13651:SF0">
    <property type="entry name" value="PROTEIN ABITRAM"/>
    <property type="match status" value="1"/>
</dbReference>
<dbReference type="Pfam" id="PF01597">
    <property type="entry name" value="GCV_H"/>
    <property type="match status" value="1"/>
</dbReference>
<dbReference type="SUPFAM" id="SSF51230">
    <property type="entry name" value="Single hybrid motif"/>
    <property type="match status" value="1"/>
</dbReference>
<organism>
    <name type="scientific">Pongo abelii</name>
    <name type="common">Sumatran orangutan</name>
    <name type="synonym">Pongo pygmaeus abelii</name>
    <dbReference type="NCBI Taxonomy" id="9601"/>
    <lineage>
        <taxon>Eukaryota</taxon>
        <taxon>Metazoa</taxon>
        <taxon>Chordata</taxon>
        <taxon>Craniata</taxon>
        <taxon>Vertebrata</taxon>
        <taxon>Euteleostomi</taxon>
        <taxon>Mammalia</taxon>
        <taxon>Eutheria</taxon>
        <taxon>Euarchontoglires</taxon>
        <taxon>Primates</taxon>
        <taxon>Haplorrhini</taxon>
        <taxon>Catarrhini</taxon>
        <taxon>Hominidae</taxon>
        <taxon>Pongo</taxon>
    </lineage>
</organism>
<keyword id="KW-0009">Actin-binding</keyword>
<keyword id="KW-0966">Cell projection</keyword>
<keyword id="KW-0539">Nucleus</keyword>
<keyword id="KW-1185">Reference proteome</keyword>
<accession>Q5RFS0</accession>
<comment type="function">
    <text evidence="1">Actin-binding protein that regulates actin polymerization, filopodia dynamics and increases the branching of proximal dendrites of developing neurons.</text>
</comment>
<comment type="subunit">
    <text evidence="1">Interacts with F-actin (By similarity). Interacts with G-actin (By similarity).</text>
</comment>
<comment type="subcellular location">
    <subcellularLocation>
        <location evidence="1">Nucleus speckle</location>
    </subcellularLocation>
    <subcellularLocation>
        <location evidence="1">Cell projection</location>
        <location evidence="1">Lamellipodium</location>
    </subcellularLocation>
    <subcellularLocation>
        <location evidence="1">Nucleus</location>
    </subcellularLocation>
    <subcellularLocation>
        <location evidence="1">Cell projection</location>
        <location evidence="1">Growth cone</location>
    </subcellularLocation>
    <subcellularLocation>
        <location evidence="1">Cell projection</location>
        <location evidence="1">Dendrite</location>
    </subcellularLocation>
    <text evidence="1">Localizes to somata and dendrites in cortical neurons (By similarity). Colocalizes with F- and G-actin in lamellipodia (By similarity). Colocalizes in the nucleus with PTK2 (By similarity).</text>
</comment>
<comment type="miscellaneous">
    <text>The name derives from simia, latin, a female ape, and M, A, T and E, the first four amino acids of the ape orthologs.</text>
</comment>
<comment type="similarity">
    <text evidence="2">Belongs to the ABITRAM family.</text>
</comment>
<evidence type="ECO:0000250" key="1">
    <source>
        <dbReference type="UniProtKB" id="Q80ZQ9"/>
    </source>
</evidence>
<evidence type="ECO:0000305" key="2"/>